<name>SYT_THEGJ</name>
<evidence type="ECO:0000255" key="1">
    <source>
        <dbReference type="HAMAP-Rule" id="MF_00184"/>
    </source>
</evidence>
<reference key="1">
    <citation type="journal article" date="2007" name="Genome Biol.">
        <title>Genome analysis and genome-wide proteomics of Thermococcus gammatolerans, the most radioresistant organism known amongst the Archaea.</title>
        <authorList>
            <person name="Zivanovic Y."/>
            <person name="Armengaud J."/>
            <person name="Lagorce A."/>
            <person name="Leplat C."/>
            <person name="Guerin P."/>
            <person name="Dutertre M."/>
            <person name="Anthouard V."/>
            <person name="Forterre P."/>
            <person name="Wincker P."/>
            <person name="Confalonieri F."/>
        </authorList>
    </citation>
    <scope>NUCLEOTIDE SEQUENCE [LARGE SCALE GENOMIC DNA]</scope>
    <source>
        <strain>DSM 15229 / JCM 11827 / EJ3</strain>
    </source>
</reference>
<comment type="function">
    <text evidence="1">Catalyzes the attachment of threonine to tRNA(Thr) in a two-step reaction: L-threonine is first activated by ATP to form Thr-AMP and then transferred to the acceptor end of tRNA(Thr). Also edits incorrectly charged L-seryl-tRNA(Thr).</text>
</comment>
<comment type="catalytic activity">
    <reaction evidence="1">
        <text>tRNA(Thr) + L-threonine + ATP = L-threonyl-tRNA(Thr) + AMP + diphosphate + H(+)</text>
        <dbReference type="Rhea" id="RHEA:24624"/>
        <dbReference type="Rhea" id="RHEA-COMP:9670"/>
        <dbReference type="Rhea" id="RHEA-COMP:9704"/>
        <dbReference type="ChEBI" id="CHEBI:15378"/>
        <dbReference type="ChEBI" id="CHEBI:30616"/>
        <dbReference type="ChEBI" id="CHEBI:33019"/>
        <dbReference type="ChEBI" id="CHEBI:57926"/>
        <dbReference type="ChEBI" id="CHEBI:78442"/>
        <dbReference type="ChEBI" id="CHEBI:78534"/>
        <dbReference type="ChEBI" id="CHEBI:456215"/>
        <dbReference type="EC" id="6.1.1.3"/>
    </reaction>
</comment>
<comment type="cofactor">
    <cofactor evidence="1">
        <name>Zn(2+)</name>
        <dbReference type="ChEBI" id="CHEBI:29105"/>
    </cofactor>
    <text evidence="1">Binds 1 zinc ion per subunit.</text>
</comment>
<comment type="subunit">
    <text evidence="1">Homodimer.</text>
</comment>
<comment type="subcellular location">
    <subcellularLocation>
        <location evidence="1">Cytoplasm</location>
    </subcellularLocation>
</comment>
<comment type="domain">
    <text evidence="1">The N-terminal domain is an archaea-specific tRNA-editing domain that hydrolyzes incorrectly charged L-seryl-tRNA(Thr). Catalysis of tRNA editing is performed by the charged tRNA itself.</text>
</comment>
<comment type="similarity">
    <text evidence="1">Belongs to the class-II aminoacyl-tRNA synthetase family.</text>
</comment>
<dbReference type="EC" id="6.1.1.3" evidence="1"/>
<dbReference type="EMBL" id="CP001398">
    <property type="protein sequence ID" value="ACS33510.1"/>
    <property type="molecule type" value="Genomic_DNA"/>
</dbReference>
<dbReference type="RefSeq" id="WP_015858624.1">
    <property type="nucleotide sequence ID" value="NC_012804.1"/>
</dbReference>
<dbReference type="SMR" id="C5A5J8"/>
<dbReference type="STRING" id="593117.TGAM_1008"/>
<dbReference type="PaxDb" id="593117-TGAM_1008"/>
<dbReference type="GeneID" id="7988065"/>
<dbReference type="KEGG" id="tga:TGAM_1008"/>
<dbReference type="PATRIC" id="fig|593117.10.peg.1004"/>
<dbReference type="eggNOG" id="arCOG00401">
    <property type="taxonomic scope" value="Archaea"/>
</dbReference>
<dbReference type="HOGENOM" id="CLU_029833_0_0_2"/>
<dbReference type="OrthoDB" id="372136at2157"/>
<dbReference type="Proteomes" id="UP000001488">
    <property type="component" value="Chromosome"/>
</dbReference>
<dbReference type="GO" id="GO:0005737">
    <property type="term" value="C:cytoplasm"/>
    <property type="evidence" value="ECO:0007669"/>
    <property type="project" value="UniProtKB-SubCell"/>
</dbReference>
<dbReference type="GO" id="GO:0005524">
    <property type="term" value="F:ATP binding"/>
    <property type="evidence" value="ECO:0007669"/>
    <property type="project" value="UniProtKB-UniRule"/>
</dbReference>
<dbReference type="GO" id="GO:0004829">
    <property type="term" value="F:threonine-tRNA ligase activity"/>
    <property type="evidence" value="ECO:0007669"/>
    <property type="project" value="UniProtKB-UniRule"/>
</dbReference>
<dbReference type="GO" id="GO:0000049">
    <property type="term" value="F:tRNA binding"/>
    <property type="evidence" value="ECO:0007669"/>
    <property type="project" value="UniProtKB-KW"/>
</dbReference>
<dbReference type="GO" id="GO:0008270">
    <property type="term" value="F:zinc ion binding"/>
    <property type="evidence" value="ECO:0007669"/>
    <property type="project" value="InterPro"/>
</dbReference>
<dbReference type="GO" id="GO:0006435">
    <property type="term" value="P:threonyl-tRNA aminoacylation"/>
    <property type="evidence" value="ECO:0007669"/>
    <property type="project" value="UniProtKB-UniRule"/>
</dbReference>
<dbReference type="CDD" id="cd00860">
    <property type="entry name" value="ThrRS_anticodon"/>
    <property type="match status" value="1"/>
</dbReference>
<dbReference type="FunFam" id="3.30.930.10:FF:000076">
    <property type="entry name" value="Threonine--tRNA ligase"/>
    <property type="match status" value="1"/>
</dbReference>
<dbReference type="FunFam" id="3.40.50.800:FF:000001">
    <property type="entry name" value="Threonine--tRNA ligase"/>
    <property type="match status" value="1"/>
</dbReference>
<dbReference type="FunFam" id="3.50.80.10:FF:000004">
    <property type="entry name" value="Threonine--tRNA ligase"/>
    <property type="match status" value="1"/>
</dbReference>
<dbReference type="Gene3D" id="3.40.50.800">
    <property type="entry name" value="Anticodon-binding domain"/>
    <property type="match status" value="1"/>
</dbReference>
<dbReference type="Gene3D" id="3.30.930.10">
    <property type="entry name" value="Bira Bifunctional Protein, Domain 2"/>
    <property type="match status" value="1"/>
</dbReference>
<dbReference type="Gene3D" id="3.50.80.10">
    <property type="entry name" value="D-tyrosyl-tRNA(Tyr) deacylase"/>
    <property type="match status" value="1"/>
</dbReference>
<dbReference type="HAMAP" id="MF_00184">
    <property type="entry name" value="Thr_tRNA_synth"/>
    <property type="match status" value="1"/>
</dbReference>
<dbReference type="InterPro" id="IPR002314">
    <property type="entry name" value="aa-tRNA-synt_IIb"/>
</dbReference>
<dbReference type="InterPro" id="IPR006195">
    <property type="entry name" value="aa-tRNA-synth_II"/>
</dbReference>
<dbReference type="InterPro" id="IPR045864">
    <property type="entry name" value="aa-tRNA-synth_II/BPL/LPL"/>
</dbReference>
<dbReference type="InterPro" id="IPR004154">
    <property type="entry name" value="Anticodon-bd"/>
</dbReference>
<dbReference type="InterPro" id="IPR036621">
    <property type="entry name" value="Anticodon-bd_dom_sf"/>
</dbReference>
<dbReference type="InterPro" id="IPR023509">
    <property type="entry name" value="DTD-like_sf"/>
</dbReference>
<dbReference type="InterPro" id="IPR002320">
    <property type="entry name" value="Thr-tRNA-ligase_IIa"/>
</dbReference>
<dbReference type="InterPro" id="IPR015011">
    <property type="entry name" value="Threonyl-tRNA_syn_edit_dom_arc"/>
</dbReference>
<dbReference type="InterPro" id="IPR047246">
    <property type="entry name" value="ThrRS_anticodon"/>
</dbReference>
<dbReference type="NCBIfam" id="NF003068">
    <property type="entry name" value="PRK03991.1"/>
    <property type="match status" value="1"/>
</dbReference>
<dbReference type="NCBIfam" id="TIGR00418">
    <property type="entry name" value="thrS"/>
    <property type="match status" value="1"/>
</dbReference>
<dbReference type="PANTHER" id="PTHR11451:SF44">
    <property type="entry name" value="THREONINE--TRNA LIGASE, CHLOROPLASTIC_MITOCHONDRIAL 2"/>
    <property type="match status" value="1"/>
</dbReference>
<dbReference type="PANTHER" id="PTHR11451">
    <property type="entry name" value="THREONINE-TRNA LIGASE"/>
    <property type="match status" value="1"/>
</dbReference>
<dbReference type="Pfam" id="PF03129">
    <property type="entry name" value="HGTP_anticodon"/>
    <property type="match status" value="1"/>
</dbReference>
<dbReference type="Pfam" id="PF00587">
    <property type="entry name" value="tRNA-synt_2b"/>
    <property type="match status" value="1"/>
</dbReference>
<dbReference type="Pfam" id="PF08915">
    <property type="entry name" value="tRNA-Thr_ED"/>
    <property type="match status" value="1"/>
</dbReference>
<dbReference type="PRINTS" id="PR01047">
    <property type="entry name" value="TRNASYNTHTHR"/>
</dbReference>
<dbReference type="SUPFAM" id="SSF52954">
    <property type="entry name" value="Class II aaRS ABD-related"/>
    <property type="match status" value="1"/>
</dbReference>
<dbReference type="SUPFAM" id="SSF55681">
    <property type="entry name" value="Class II aaRS and biotin synthetases"/>
    <property type="match status" value="1"/>
</dbReference>
<dbReference type="PROSITE" id="PS50862">
    <property type="entry name" value="AA_TRNA_LIGASE_II"/>
    <property type="match status" value="1"/>
</dbReference>
<keyword id="KW-0030">Aminoacyl-tRNA synthetase</keyword>
<keyword id="KW-0067">ATP-binding</keyword>
<keyword id="KW-0963">Cytoplasm</keyword>
<keyword id="KW-0436">Ligase</keyword>
<keyword id="KW-0479">Metal-binding</keyword>
<keyword id="KW-0547">Nucleotide-binding</keyword>
<keyword id="KW-0648">Protein biosynthesis</keyword>
<keyword id="KW-1185">Reference proteome</keyword>
<keyword id="KW-0694">RNA-binding</keyword>
<keyword id="KW-0820">tRNA-binding</keyword>
<keyword id="KW-0862">Zinc</keyword>
<protein>
    <recommendedName>
        <fullName evidence="1">Threonine--tRNA ligase</fullName>
        <ecNumber evidence="1">6.1.1.3</ecNumber>
    </recommendedName>
    <alternativeName>
        <fullName evidence="1">Threonyl-tRNA synthetase</fullName>
        <shortName evidence="1">ThrRS</shortName>
    </alternativeName>
</protein>
<organism>
    <name type="scientific">Thermococcus gammatolerans (strain DSM 15229 / JCM 11827 / EJ3)</name>
    <dbReference type="NCBI Taxonomy" id="593117"/>
    <lineage>
        <taxon>Archaea</taxon>
        <taxon>Methanobacteriati</taxon>
        <taxon>Methanobacteriota</taxon>
        <taxon>Thermococci</taxon>
        <taxon>Thermococcales</taxon>
        <taxon>Thermococcaceae</taxon>
        <taxon>Thermococcus</taxon>
    </lineage>
</organism>
<feature type="chain" id="PRO_1000203927" description="Threonine--tRNA ligase">
    <location>
        <begin position="1"/>
        <end position="626"/>
    </location>
</feature>
<feature type="region of interest" description="Editing domain" evidence="1">
    <location>
        <begin position="1"/>
        <end position="144"/>
    </location>
</feature>
<feature type="region of interest" description="Catalytic" evidence="1">
    <location>
        <begin position="207"/>
        <end position="506"/>
    </location>
</feature>
<feature type="binding site" evidence="1">
    <location>
        <position position="299"/>
    </location>
    <ligand>
        <name>Zn(2+)</name>
        <dbReference type="ChEBI" id="CHEBI:29105"/>
    </ligand>
</feature>
<feature type="binding site" evidence="1">
    <location>
        <position position="351"/>
    </location>
    <ligand>
        <name>Zn(2+)</name>
        <dbReference type="ChEBI" id="CHEBI:29105"/>
    </ligand>
</feature>
<feature type="binding site" evidence="1">
    <location>
        <position position="475"/>
    </location>
    <ligand>
        <name>Zn(2+)</name>
        <dbReference type="ChEBI" id="CHEBI:29105"/>
    </ligand>
</feature>
<accession>C5A5J8</accession>
<sequence length="626" mass="73148">MRMLLIHADYLEYEVRDKALKNPEPISDEQRKGRLDEVLAVFISVEKVDEANPEEVVGKAVAEIEDVAKQVKAERIFVYPFAHLSSELAKPDVALEVLKKIEEKLKEKGYEVKRAPFGYYKAFKLSCKGHPLAELSRTIVPEEGVSKEERNIALEKEEKELVSYWYILTPEGELIEVDKFDFTGHENLRKFVNYEIAKNRIADREPPHVRLMLEHELVDYEPGSDAGNLRYYPKGRLIKGLLEQYVTEKVVEYGAMEVETPIMYDFEHPALEKYLNRFPARQYIVKSGDKKFFLRFAACFGQFLIKKDAIISYRNLPLRMYELTRYSFRREKSGELSGLRRLRAFTMPDMHTVAKDLKQAMDEFKKQYKLSMEVLRGVGLTPDDYEVAIRFTHDFWEANKDFIVELAKIIGKPVLIEMWDQRFFYFILKFEFNFVDNLDKAAALSTVQIDVENAERFGITYYDEEGKERYPLILHCSPSGAIERVMYAILEKQAKLQAQGKKPMFPLWLSPIQVRVIPVSDDVLDYALYVAGKLEGAKIRVDVDDTNDRLNKKIRKAEKEWVPYIIVVGKNEKEQNTVTVRRREDGKQVEMQLEDLIREIRQKTEGFPYKPRPLPLLLSRRPKFRG</sequence>
<gene>
    <name evidence="1" type="primary">thrS</name>
    <name type="ordered locus">TGAM_1008</name>
</gene>
<proteinExistence type="inferred from homology"/>